<sequence>MIKAVKMNTSFDKEKVRKHLPGAIFLSLVVITSLWLVISTISWMTDEDRLPLSHMIIQGQLKHITADDIREAIDSMDSIGTFMTQDVNKLQDALLSLPWIAQVSVRKQWPETIKVFVVEHQPEATWNNRVIVNPEGVVFNAPMSDLREPKPALFGPETSSKDVLDFWHQLQKQFEPIHVTVHSVALTERLSWQVVLDNGIRLELGRDSREERVERFIALYKQLESKKDSIDYIDLRYDTGAAVGWKSDDVENKEEN</sequence>
<proteinExistence type="inferred from homology"/>
<feature type="chain" id="PRO_0000414701" description="Cell division protein FtsQ">
    <location>
        <begin position="1"/>
        <end position="256"/>
    </location>
</feature>
<feature type="topological domain" description="Cytoplasmic" evidence="1">
    <location>
        <begin position="1"/>
        <end position="23"/>
    </location>
</feature>
<feature type="transmembrane region" description="Helical" evidence="1">
    <location>
        <begin position="24"/>
        <end position="44"/>
    </location>
</feature>
<feature type="topological domain" description="Periplasmic" evidence="1">
    <location>
        <begin position="45"/>
        <end position="256"/>
    </location>
</feature>
<feature type="domain" description="POTRA" evidence="2">
    <location>
        <begin position="50"/>
        <end position="120"/>
    </location>
</feature>
<accession>Q5E2Q2</accession>
<comment type="function">
    <text evidence="1">Essential cell division protein. May link together the upstream cell division proteins, which are predominantly cytoplasmic, with the downstream cell division proteins, which are predominantly periplasmic. May control correct divisome assembly.</text>
</comment>
<comment type="subunit">
    <text evidence="1">Part of a complex composed of FtsB, FtsL and FtsQ.</text>
</comment>
<comment type="subcellular location">
    <subcellularLocation>
        <location evidence="1">Cell inner membrane</location>
        <topology evidence="1">Single-pass type II membrane protein</topology>
    </subcellularLocation>
    <text evidence="1">Localizes to the division septum.</text>
</comment>
<comment type="similarity">
    <text evidence="1">Belongs to the FtsQ/DivIB family. FtsQ subfamily.</text>
</comment>
<name>FTSQ_ALIF1</name>
<dbReference type="EMBL" id="CP000020">
    <property type="protein sequence ID" value="AAW86694.2"/>
    <property type="molecule type" value="Genomic_DNA"/>
</dbReference>
<dbReference type="RefSeq" id="YP_205582.2">
    <property type="nucleotide sequence ID" value="NC_006840.2"/>
</dbReference>
<dbReference type="SMR" id="Q5E2Q2"/>
<dbReference type="STRING" id="312309.VF_2199"/>
<dbReference type="EnsemblBacteria" id="AAW86694">
    <property type="protein sequence ID" value="AAW86694"/>
    <property type="gene ID" value="VF_2199"/>
</dbReference>
<dbReference type="KEGG" id="vfi:VF_2199"/>
<dbReference type="PATRIC" id="fig|312309.11.peg.2238"/>
<dbReference type="eggNOG" id="COG1589">
    <property type="taxonomic scope" value="Bacteria"/>
</dbReference>
<dbReference type="HOGENOM" id="CLU_064041_2_1_6"/>
<dbReference type="OrthoDB" id="9790370at2"/>
<dbReference type="Proteomes" id="UP000000537">
    <property type="component" value="Chromosome I"/>
</dbReference>
<dbReference type="GO" id="GO:0032153">
    <property type="term" value="C:cell division site"/>
    <property type="evidence" value="ECO:0007669"/>
    <property type="project" value="UniProtKB-UniRule"/>
</dbReference>
<dbReference type="GO" id="GO:0005886">
    <property type="term" value="C:plasma membrane"/>
    <property type="evidence" value="ECO:0007669"/>
    <property type="project" value="UniProtKB-SubCell"/>
</dbReference>
<dbReference type="GO" id="GO:0090529">
    <property type="term" value="P:cell septum assembly"/>
    <property type="evidence" value="ECO:0007669"/>
    <property type="project" value="InterPro"/>
</dbReference>
<dbReference type="GO" id="GO:0043093">
    <property type="term" value="P:FtsZ-dependent cytokinesis"/>
    <property type="evidence" value="ECO:0007669"/>
    <property type="project" value="UniProtKB-UniRule"/>
</dbReference>
<dbReference type="Gene3D" id="3.40.50.11690">
    <property type="entry name" value="Cell division protein FtsQ/DivIB"/>
    <property type="match status" value="1"/>
</dbReference>
<dbReference type="Gene3D" id="3.10.20.310">
    <property type="entry name" value="membrane protein fhac"/>
    <property type="match status" value="1"/>
</dbReference>
<dbReference type="HAMAP" id="MF_00911">
    <property type="entry name" value="FtsQ_subfam"/>
    <property type="match status" value="1"/>
</dbReference>
<dbReference type="InterPro" id="IPR005548">
    <property type="entry name" value="Cell_div_FtsQ/DivIB_C"/>
</dbReference>
<dbReference type="InterPro" id="IPR026579">
    <property type="entry name" value="FtsQ"/>
</dbReference>
<dbReference type="InterPro" id="IPR045335">
    <property type="entry name" value="FtsQ_C_sf"/>
</dbReference>
<dbReference type="InterPro" id="IPR034746">
    <property type="entry name" value="POTRA"/>
</dbReference>
<dbReference type="InterPro" id="IPR013685">
    <property type="entry name" value="POTRA_FtsQ_type"/>
</dbReference>
<dbReference type="PANTHER" id="PTHR35851">
    <property type="entry name" value="CELL DIVISION PROTEIN FTSQ"/>
    <property type="match status" value="1"/>
</dbReference>
<dbReference type="PANTHER" id="PTHR35851:SF1">
    <property type="entry name" value="CELL DIVISION PROTEIN FTSQ"/>
    <property type="match status" value="1"/>
</dbReference>
<dbReference type="Pfam" id="PF03799">
    <property type="entry name" value="FtsQ_DivIB_C"/>
    <property type="match status" value="1"/>
</dbReference>
<dbReference type="Pfam" id="PF08478">
    <property type="entry name" value="POTRA_1"/>
    <property type="match status" value="1"/>
</dbReference>
<dbReference type="PROSITE" id="PS51779">
    <property type="entry name" value="POTRA"/>
    <property type="match status" value="1"/>
</dbReference>
<gene>
    <name evidence="1" type="primary">ftsQ</name>
    <name type="ordered locus">VF_2199</name>
</gene>
<reference key="1">
    <citation type="journal article" date="2005" name="Proc. Natl. Acad. Sci. U.S.A.">
        <title>Complete genome sequence of Vibrio fischeri: a symbiotic bacterium with pathogenic congeners.</title>
        <authorList>
            <person name="Ruby E.G."/>
            <person name="Urbanowski M."/>
            <person name="Campbell J."/>
            <person name="Dunn A."/>
            <person name="Faini M."/>
            <person name="Gunsalus R."/>
            <person name="Lostroh P."/>
            <person name="Lupp C."/>
            <person name="McCann J."/>
            <person name="Millikan D."/>
            <person name="Schaefer A."/>
            <person name="Stabb E."/>
            <person name="Stevens A."/>
            <person name="Visick K."/>
            <person name="Whistler C."/>
            <person name="Greenberg E.P."/>
        </authorList>
    </citation>
    <scope>NUCLEOTIDE SEQUENCE [LARGE SCALE GENOMIC DNA]</scope>
    <source>
        <strain>ATCC 700601 / ES114</strain>
    </source>
</reference>
<protein>
    <recommendedName>
        <fullName evidence="1">Cell division protein FtsQ</fullName>
    </recommendedName>
</protein>
<organism>
    <name type="scientific">Aliivibrio fischeri (strain ATCC 700601 / ES114)</name>
    <name type="common">Vibrio fischeri</name>
    <dbReference type="NCBI Taxonomy" id="312309"/>
    <lineage>
        <taxon>Bacteria</taxon>
        <taxon>Pseudomonadati</taxon>
        <taxon>Pseudomonadota</taxon>
        <taxon>Gammaproteobacteria</taxon>
        <taxon>Vibrionales</taxon>
        <taxon>Vibrionaceae</taxon>
        <taxon>Aliivibrio</taxon>
    </lineage>
</organism>
<evidence type="ECO:0000255" key="1">
    <source>
        <dbReference type="HAMAP-Rule" id="MF_00911"/>
    </source>
</evidence>
<evidence type="ECO:0000255" key="2">
    <source>
        <dbReference type="PROSITE-ProRule" id="PRU01115"/>
    </source>
</evidence>
<keyword id="KW-0131">Cell cycle</keyword>
<keyword id="KW-0132">Cell division</keyword>
<keyword id="KW-0997">Cell inner membrane</keyword>
<keyword id="KW-1003">Cell membrane</keyword>
<keyword id="KW-0472">Membrane</keyword>
<keyword id="KW-1185">Reference proteome</keyword>
<keyword id="KW-0812">Transmembrane</keyword>
<keyword id="KW-1133">Transmembrane helix</keyword>